<gene>
    <name evidence="1" type="primary">argS</name>
    <name type="ordered locus">WP1227</name>
</gene>
<comment type="catalytic activity">
    <reaction evidence="1">
        <text>tRNA(Arg) + L-arginine + ATP = L-arginyl-tRNA(Arg) + AMP + diphosphate</text>
        <dbReference type="Rhea" id="RHEA:20301"/>
        <dbReference type="Rhea" id="RHEA-COMP:9658"/>
        <dbReference type="Rhea" id="RHEA-COMP:9673"/>
        <dbReference type="ChEBI" id="CHEBI:30616"/>
        <dbReference type="ChEBI" id="CHEBI:32682"/>
        <dbReference type="ChEBI" id="CHEBI:33019"/>
        <dbReference type="ChEBI" id="CHEBI:78442"/>
        <dbReference type="ChEBI" id="CHEBI:78513"/>
        <dbReference type="ChEBI" id="CHEBI:456215"/>
        <dbReference type="EC" id="6.1.1.19"/>
    </reaction>
</comment>
<comment type="subunit">
    <text evidence="1">Monomer.</text>
</comment>
<comment type="subcellular location">
    <subcellularLocation>
        <location evidence="1">Cytoplasm</location>
    </subcellularLocation>
</comment>
<comment type="similarity">
    <text evidence="1">Belongs to the class-I aminoacyl-tRNA synthetase family.</text>
</comment>
<evidence type="ECO:0000255" key="1">
    <source>
        <dbReference type="HAMAP-Rule" id="MF_00123"/>
    </source>
</evidence>
<protein>
    <recommendedName>
        <fullName evidence="1">Arginine--tRNA ligase</fullName>
        <ecNumber evidence="1">6.1.1.19</ecNumber>
    </recommendedName>
    <alternativeName>
        <fullName evidence="1">Arginyl-tRNA synthetase</fullName>
        <shortName evidence="1">ArgRS</shortName>
    </alternativeName>
</protein>
<keyword id="KW-0030">Aminoacyl-tRNA synthetase</keyword>
<keyword id="KW-0067">ATP-binding</keyword>
<keyword id="KW-0963">Cytoplasm</keyword>
<keyword id="KW-0436">Ligase</keyword>
<keyword id="KW-0547">Nucleotide-binding</keyword>
<keyword id="KW-0648">Protein biosynthesis</keyword>
<organism>
    <name type="scientific">Wolbachia pipientis subsp. Culex pipiens (strain wPip)</name>
    <dbReference type="NCBI Taxonomy" id="570417"/>
    <lineage>
        <taxon>Bacteria</taxon>
        <taxon>Pseudomonadati</taxon>
        <taxon>Pseudomonadota</taxon>
        <taxon>Alphaproteobacteria</taxon>
        <taxon>Rickettsiales</taxon>
        <taxon>Anaplasmataceae</taxon>
        <taxon>Wolbachieae</taxon>
        <taxon>Wolbachia</taxon>
    </lineage>
</organism>
<accession>B3CNF3</accession>
<name>SYR_WOLPP</name>
<reference key="1">
    <citation type="journal article" date="2008" name="Mol. Biol. Evol.">
        <title>Genome evolution of Wolbachia strain wPip from the Culex pipiens group.</title>
        <authorList>
            <person name="Klasson L."/>
            <person name="Walker T."/>
            <person name="Sebaihia M."/>
            <person name="Sanders M.J."/>
            <person name="Quail M.A."/>
            <person name="Lord A."/>
            <person name="Sanders S."/>
            <person name="Earl J."/>
            <person name="O'Neill S.L."/>
            <person name="Thomson N."/>
            <person name="Sinkins S.P."/>
            <person name="Parkhill J."/>
        </authorList>
    </citation>
    <scope>NUCLEOTIDE SEQUENCE [LARGE SCALE GENOMIC DNA]</scope>
    <source>
        <strain>wPip</strain>
    </source>
</reference>
<feature type="chain" id="PRO_1000095419" description="Arginine--tRNA ligase">
    <location>
        <begin position="1"/>
        <end position="566"/>
    </location>
</feature>
<feature type="short sequence motif" description="'HIGH' region">
    <location>
        <begin position="129"/>
        <end position="139"/>
    </location>
</feature>
<sequence>MNIFKQISSLISSKLNELKQRGVINTSAENFIVEPPSNRAHGDIYTNVAMVLAKHEKKNPIEIAGILAREFKPFDEVAEVEIASPGFINMHLKIEVWHGILKQINELKTEFGTLNIGNNQAVNVEFVSANPTGPLHIGHARGAVFGDVLANLLKKVGYNVTKEYYINDAGAQIDTLIRSVYLRYKEALGEKISIEKGLYPGEYLKPIGEGLAKKYGKELRAEEDNQIIREYTLSSILELIKEDMSLLGVNHDVFTSEYELRGKIEESIKILSDKGLVYEGYLEKPKGKESENWTSRKEMLFRSTKFGDDVDRALKKEDGSWTYFASDIAYHFDKISRGFNNMIVELGSDHGGYVKRLKAVVSALSDDQAKIEVKLHNIVNFFENEKPVKMSKRSGNFLTARDVVEEVGRDITRFIMLTRKNDMVLDFDFAKVKEQSKDNPIFYVQYAHARAHSLMRNAPKELPTADPSLLKTDGELFLIKILAKWPDVVEIAARLYEPHRITFYLLEVAEAFHVLWGYGKSDLNMRFILEDNLNLTAARMFLVQALAHVIASGLSIFNIEPLKEMC</sequence>
<proteinExistence type="inferred from homology"/>
<dbReference type="EC" id="6.1.1.19" evidence="1"/>
<dbReference type="EMBL" id="AM999887">
    <property type="protein sequence ID" value="CAQ55335.1"/>
    <property type="molecule type" value="Genomic_DNA"/>
</dbReference>
<dbReference type="RefSeq" id="WP_007302586.1">
    <property type="nucleotide sequence ID" value="NC_010981.1"/>
</dbReference>
<dbReference type="SMR" id="B3CNF3"/>
<dbReference type="KEGG" id="wpi:WP1227"/>
<dbReference type="eggNOG" id="COG0018">
    <property type="taxonomic scope" value="Bacteria"/>
</dbReference>
<dbReference type="HOGENOM" id="CLU_006406_0_1_5"/>
<dbReference type="Proteomes" id="UP000008814">
    <property type="component" value="Chromosome"/>
</dbReference>
<dbReference type="GO" id="GO:0005737">
    <property type="term" value="C:cytoplasm"/>
    <property type="evidence" value="ECO:0007669"/>
    <property type="project" value="UniProtKB-SubCell"/>
</dbReference>
<dbReference type="GO" id="GO:0004814">
    <property type="term" value="F:arginine-tRNA ligase activity"/>
    <property type="evidence" value="ECO:0007669"/>
    <property type="project" value="UniProtKB-UniRule"/>
</dbReference>
<dbReference type="GO" id="GO:0005524">
    <property type="term" value="F:ATP binding"/>
    <property type="evidence" value="ECO:0007669"/>
    <property type="project" value="UniProtKB-UniRule"/>
</dbReference>
<dbReference type="GO" id="GO:0006420">
    <property type="term" value="P:arginyl-tRNA aminoacylation"/>
    <property type="evidence" value="ECO:0007669"/>
    <property type="project" value="UniProtKB-UniRule"/>
</dbReference>
<dbReference type="CDD" id="cd00671">
    <property type="entry name" value="ArgRS_core"/>
    <property type="match status" value="1"/>
</dbReference>
<dbReference type="Gene3D" id="3.30.1360.70">
    <property type="entry name" value="Arginyl tRNA synthetase N-terminal domain"/>
    <property type="match status" value="1"/>
</dbReference>
<dbReference type="Gene3D" id="3.40.50.620">
    <property type="entry name" value="HUPs"/>
    <property type="match status" value="1"/>
</dbReference>
<dbReference type="Gene3D" id="1.10.730.10">
    <property type="entry name" value="Isoleucyl-tRNA Synthetase, Domain 1"/>
    <property type="match status" value="1"/>
</dbReference>
<dbReference type="HAMAP" id="MF_00123">
    <property type="entry name" value="Arg_tRNA_synth"/>
    <property type="match status" value="1"/>
</dbReference>
<dbReference type="InterPro" id="IPR001412">
    <property type="entry name" value="aa-tRNA-synth_I_CS"/>
</dbReference>
<dbReference type="InterPro" id="IPR001278">
    <property type="entry name" value="Arg-tRNA-ligase"/>
</dbReference>
<dbReference type="InterPro" id="IPR005148">
    <property type="entry name" value="Arg-tRNA-synth_N"/>
</dbReference>
<dbReference type="InterPro" id="IPR036695">
    <property type="entry name" value="Arg-tRNA-synth_N_sf"/>
</dbReference>
<dbReference type="InterPro" id="IPR035684">
    <property type="entry name" value="ArgRS_core"/>
</dbReference>
<dbReference type="InterPro" id="IPR008909">
    <property type="entry name" value="DALR_anticod-bd"/>
</dbReference>
<dbReference type="InterPro" id="IPR014729">
    <property type="entry name" value="Rossmann-like_a/b/a_fold"/>
</dbReference>
<dbReference type="InterPro" id="IPR009080">
    <property type="entry name" value="tRNAsynth_Ia_anticodon-bd"/>
</dbReference>
<dbReference type="NCBIfam" id="TIGR00456">
    <property type="entry name" value="argS"/>
    <property type="match status" value="1"/>
</dbReference>
<dbReference type="PANTHER" id="PTHR11956:SF5">
    <property type="entry name" value="ARGININE--TRNA LIGASE, CYTOPLASMIC"/>
    <property type="match status" value="1"/>
</dbReference>
<dbReference type="PANTHER" id="PTHR11956">
    <property type="entry name" value="ARGINYL-TRNA SYNTHETASE"/>
    <property type="match status" value="1"/>
</dbReference>
<dbReference type="Pfam" id="PF03485">
    <property type="entry name" value="Arg_tRNA_synt_N"/>
    <property type="match status" value="1"/>
</dbReference>
<dbReference type="Pfam" id="PF05746">
    <property type="entry name" value="DALR_1"/>
    <property type="match status" value="1"/>
</dbReference>
<dbReference type="Pfam" id="PF00750">
    <property type="entry name" value="tRNA-synt_1d"/>
    <property type="match status" value="1"/>
</dbReference>
<dbReference type="PRINTS" id="PR01038">
    <property type="entry name" value="TRNASYNTHARG"/>
</dbReference>
<dbReference type="SMART" id="SM01016">
    <property type="entry name" value="Arg_tRNA_synt_N"/>
    <property type="match status" value="1"/>
</dbReference>
<dbReference type="SMART" id="SM00836">
    <property type="entry name" value="DALR_1"/>
    <property type="match status" value="1"/>
</dbReference>
<dbReference type="SUPFAM" id="SSF47323">
    <property type="entry name" value="Anticodon-binding domain of a subclass of class I aminoacyl-tRNA synthetases"/>
    <property type="match status" value="1"/>
</dbReference>
<dbReference type="SUPFAM" id="SSF55190">
    <property type="entry name" value="Arginyl-tRNA synthetase (ArgRS), N-terminal 'additional' domain"/>
    <property type="match status" value="1"/>
</dbReference>
<dbReference type="SUPFAM" id="SSF52374">
    <property type="entry name" value="Nucleotidylyl transferase"/>
    <property type="match status" value="1"/>
</dbReference>
<dbReference type="PROSITE" id="PS00178">
    <property type="entry name" value="AA_TRNA_LIGASE_I"/>
    <property type="match status" value="1"/>
</dbReference>